<sequence length="390" mass="43047">MKFVDEATILIVAGDGGNGCISFRREKYIPNGGPDGGDGGDGGDVYLLADENLNTLIDYRFEKSFRAERGQNGQSRDCTGKRGKDITIKVPVGTRVLDQGTGEVLGDMTRHQQSLMVGKGGWHGLGNSRFKSSVNRAPRQKTNGTKGEERELTLELLLLADVGMLGLPNAGKSTFIRAVSAAKPKVADYPFTTLVPSLGVVRMDSEQSFVVADIPGLIEGASDGAGLGIRFLKHLERCRVLLHLVDLAPIDESNPIENAKVIINELEQYGAGLAEKPRWLVFNKVDLIDKAEAEKRAKEIAAALGWDDKYYLISAANREGVNPLCWDVMNFLKANPKMMAIAESAPEKVEFMWDDYHREQLAEVEKEAEEEWDDDWDDEDDEGVEIIYQK</sequence>
<reference key="1">
    <citation type="journal article" date="2004" name="Proc. Natl. Acad. Sci. U.S.A.">
        <title>Genome sequence of the enterobacterial phytopathogen Erwinia carotovora subsp. atroseptica and characterization of virulence factors.</title>
        <authorList>
            <person name="Bell K.S."/>
            <person name="Sebaihia M."/>
            <person name="Pritchard L."/>
            <person name="Holden M.T.G."/>
            <person name="Hyman L.J."/>
            <person name="Holeva M.C."/>
            <person name="Thomson N.R."/>
            <person name="Bentley S.D."/>
            <person name="Churcher L.J.C."/>
            <person name="Mungall K."/>
            <person name="Atkin R."/>
            <person name="Bason N."/>
            <person name="Brooks K."/>
            <person name="Chillingworth T."/>
            <person name="Clark K."/>
            <person name="Doggett J."/>
            <person name="Fraser A."/>
            <person name="Hance Z."/>
            <person name="Hauser H."/>
            <person name="Jagels K."/>
            <person name="Moule S."/>
            <person name="Norbertczak H."/>
            <person name="Ormond D."/>
            <person name="Price C."/>
            <person name="Quail M.A."/>
            <person name="Sanders M."/>
            <person name="Walker D."/>
            <person name="Whitehead S."/>
            <person name="Salmond G.P.C."/>
            <person name="Birch P.R.J."/>
            <person name="Parkhill J."/>
            <person name="Toth I.K."/>
        </authorList>
    </citation>
    <scope>NUCLEOTIDE SEQUENCE [LARGE SCALE GENOMIC DNA]</scope>
    <source>
        <strain>SCRI 1043 / ATCC BAA-672</strain>
    </source>
</reference>
<dbReference type="EC" id="3.6.5.-" evidence="1"/>
<dbReference type="EMBL" id="BX950851">
    <property type="protein sequence ID" value="CAG73607.1"/>
    <property type="molecule type" value="Genomic_DNA"/>
</dbReference>
<dbReference type="SMR" id="Q6D9C3"/>
<dbReference type="STRING" id="218491.ECA0693"/>
<dbReference type="KEGG" id="eca:ECA0693"/>
<dbReference type="PATRIC" id="fig|218491.5.peg.689"/>
<dbReference type="eggNOG" id="COG0536">
    <property type="taxonomic scope" value="Bacteria"/>
</dbReference>
<dbReference type="HOGENOM" id="CLU_011747_2_0_6"/>
<dbReference type="OrthoDB" id="9807318at2"/>
<dbReference type="Proteomes" id="UP000007966">
    <property type="component" value="Chromosome"/>
</dbReference>
<dbReference type="GO" id="GO:0005737">
    <property type="term" value="C:cytoplasm"/>
    <property type="evidence" value="ECO:0007669"/>
    <property type="project" value="UniProtKB-SubCell"/>
</dbReference>
<dbReference type="GO" id="GO:0005525">
    <property type="term" value="F:GTP binding"/>
    <property type="evidence" value="ECO:0007669"/>
    <property type="project" value="UniProtKB-UniRule"/>
</dbReference>
<dbReference type="GO" id="GO:0003924">
    <property type="term" value="F:GTPase activity"/>
    <property type="evidence" value="ECO:0007669"/>
    <property type="project" value="UniProtKB-UniRule"/>
</dbReference>
<dbReference type="GO" id="GO:0000287">
    <property type="term" value="F:magnesium ion binding"/>
    <property type="evidence" value="ECO:0007669"/>
    <property type="project" value="InterPro"/>
</dbReference>
<dbReference type="GO" id="GO:0042254">
    <property type="term" value="P:ribosome biogenesis"/>
    <property type="evidence" value="ECO:0007669"/>
    <property type="project" value="UniProtKB-UniRule"/>
</dbReference>
<dbReference type="CDD" id="cd01898">
    <property type="entry name" value="Obg"/>
    <property type="match status" value="1"/>
</dbReference>
<dbReference type="FunFam" id="2.70.210.12:FF:000001">
    <property type="entry name" value="GTPase Obg"/>
    <property type="match status" value="1"/>
</dbReference>
<dbReference type="FunFam" id="3.40.50.300:FF:000185">
    <property type="entry name" value="GTPase Obg"/>
    <property type="match status" value="1"/>
</dbReference>
<dbReference type="Gene3D" id="2.70.210.12">
    <property type="entry name" value="GTP1/OBG domain"/>
    <property type="match status" value="1"/>
</dbReference>
<dbReference type="Gene3D" id="3.40.50.300">
    <property type="entry name" value="P-loop containing nucleotide triphosphate hydrolases"/>
    <property type="match status" value="1"/>
</dbReference>
<dbReference type="HAMAP" id="MF_01454">
    <property type="entry name" value="GTPase_Obg"/>
    <property type="match status" value="1"/>
</dbReference>
<dbReference type="InterPro" id="IPR031167">
    <property type="entry name" value="G_OBG"/>
</dbReference>
<dbReference type="InterPro" id="IPR006073">
    <property type="entry name" value="GTP-bd"/>
</dbReference>
<dbReference type="InterPro" id="IPR014100">
    <property type="entry name" value="GTP-bd_Obg/CgtA"/>
</dbReference>
<dbReference type="InterPro" id="IPR006074">
    <property type="entry name" value="GTP1-OBG_CS"/>
</dbReference>
<dbReference type="InterPro" id="IPR006169">
    <property type="entry name" value="GTP1_OBG_dom"/>
</dbReference>
<dbReference type="InterPro" id="IPR036726">
    <property type="entry name" value="GTP1_OBG_dom_sf"/>
</dbReference>
<dbReference type="InterPro" id="IPR045086">
    <property type="entry name" value="OBG_GTPase"/>
</dbReference>
<dbReference type="InterPro" id="IPR027417">
    <property type="entry name" value="P-loop_NTPase"/>
</dbReference>
<dbReference type="NCBIfam" id="TIGR02729">
    <property type="entry name" value="Obg_CgtA"/>
    <property type="match status" value="1"/>
</dbReference>
<dbReference type="NCBIfam" id="NF008955">
    <property type="entry name" value="PRK12297.1"/>
    <property type="match status" value="1"/>
</dbReference>
<dbReference type="NCBIfam" id="NF008956">
    <property type="entry name" value="PRK12299.1"/>
    <property type="match status" value="1"/>
</dbReference>
<dbReference type="PANTHER" id="PTHR11702">
    <property type="entry name" value="DEVELOPMENTALLY REGULATED GTP-BINDING PROTEIN-RELATED"/>
    <property type="match status" value="1"/>
</dbReference>
<dbReference type="PANTHER" id="PTHR11702:SF31">
    <property type="entry name" value="MITOCHONDRIAL RIBOSOME-ASSOCIATED GTPASE 2"/>
    <property type="match status" value="1"/>
</dbReference>
<dbReference type="Pfam" id="PF01018">
    <property type="entry name" value="GTP1_OBG"/>
    <property type="match status" value="1"/>
</dbReference>
<dbReference type="Pfam" id="PF01926">
    <property type="entry name" value="MMR_HSR1"/>
    <property type="match status" value="1"/>
</dbReference>
<dbReference type="PIRSF" id="PIRSF002401">
    <property type="entry name" value="GTP_bd_Obg/CgtA"/>
    <property type="match status" value="1"/>
</dbReference>
<dbReference type="PRINTS" id="PR00326">
    <property type="entry name" value="GTP1OBG"/>
</dbReference>
<dbReference type="SUPFAM" id="SSF82051">
    <property type="entry name" value="Obg GTP-binding protein N-terminal domain"/>
    <property type="match status" value="1"/>
</dbReference>
<dbReference type="SUPFAM" id="SSF52540">
    <property type="entry name" value="P-loop containing nucleoside triphosphate hydrolases"/>
    <property type="match status" value="1"/>
</dbReference>
<dbReference type="PROSITE" id="PS51710">
    <property type="entry name" value="G_OBG"/>
    <property type="match status" value="1"/>
</dbReference>
<dbReference type="PROSITE" id="PS00905">
    <property type="entry name" value="GTP1_OBG"/>
    <property type="match status" value="1"/>
</dbReference>
<dbReference type="PROSITE" id="PS51883">
    <property type="entry name" value="OBG"/>
    <property type="match status" value="1"/>
</dbReference>
<evidence type="ECO:0000255" key="1">
    <source>
        <dbReference type="HAMAP-Rule" id="MF_01454"/>
    </source>
</evidence>
<evidence type="ECO:0000255" key="2">
    <source>
        <dbReference type="PROSITE-ProRule" id="PRU01231"/>
    </source>
</evidence>
<evidence type="ECO:0000256" key="3">
    <source>
        <dbReference type="SAM" id="MobiDB-lite"/>
    </source>
</evidence>
<protein>
    <recommendedName>
        <fullName evidence="1">GTPase Obg</fullName>
        <ecNumber evidence="1">3.6.5.-</ecNumber>
    </recommendedName>
    <alternativeName>
        <fullName evidence="1">GTP-binding protein Obg</fullName>
    </alternativeName>
</protein>
<organism>
    <name type="scientific">Pectobacterium atrosepticum (strain SCRI 1043 / ATCC BAA-672)</name>
    <name type="common">Erwinia carotovora subsp. atroseptica</name>
    <dbReference type="NCBI Taxonomy" id="218491"/>
    <lineage>
        <taxon>Bacteria</taxon>
        <taxon>Pseudomonadati</taxon>
        <taxon>Pseudomonadota</taxon>
        <taxon>Gammaproteobacteria</taxon>
        <taxon>Enterobacterales</taxon>
        <taxon>Pectobacteriaceae</taxon>
        <taxon>Pectobacterium</taxon>
    </lineage>
</organism>
<proteinExistence type="inferred from homology"/>
<name>OBG_PECAS</name>
<accession>Q6D9C3</accession>
<feature type="chain" id="PRO_0000385907" description="GTPase Obg">
    <location>
        <begin position="1"/>
        <end position="390"/>
    </location>
</feature>
<feature type="domain" description="Obg" evidence="2">
    <location>
        <begin position="1"/>
        <end position="159"/>
    </location>
</feature>
<feature type="domain" description="OBG-type G" evidence="1">
    <location>
        <begin position="160"/>
        <end position="333"/>
    </location>
</feature>
<feature type="region of interest" description="Disordered" evidence="3">
    <location>
        <begin position="128"/>
        <end position="147"/>
    </location>
</feature>
<feature type="compositionally biased region" description="Polar residues" evidence="3">
    <location>
        <begin position="129"/>
        <end position="145"/>
    </location>
</feature>
<feature type="binding site" evidence="1">
    <location>
        <begin position="166"/>
        <end position="173"/>
    </location>
    <ligand>
        <name>GTP</name>
        <dbReference type="ChEBI" id="CHEBI:37565"/>
    </ligand>
</feature>
<feature type="binding site" evidence="1">
    <location>
        <position position="173"/>
    </location>
    <ligand>
        <name>Mg(2+)</name>
        <dbReference type="ChEBI" id="CHEBI:18420"/>
    </ligand>
</feature>
<feature type="binding site" evidence="1">
    <location>
        <begin position="191"/>
        <end position="195"/>
    </location>
    <ligand>
        <name>GTP</name>
        <dbReference type="ChEBI" id="CHEBI:37565"/>
    </ligand>
</feature>
<feature type="binding site" evidence="1">
    <location>
        <position position="193"/>
    </location>
    <ligand>
        <name>Mg(2+)</name>
        <dbReference type="ChEBI" id="CHEBI:18420"/>
    </ligand>
</feature>
<feature type="binding site" evidence="1">
    <location>
        <begin position="213"/>
        <end position="216"/>
    </location>
    <ligand>
        <name>GTP</name>
        <dbReference type="ChEBI" id="CHEBI:37565"/>
    </ligand>
</feature>
<feature type="binding site" evidence="1">
    <location>
        <begin position="283"/>
        <end position="286"/>
    </location>
    <ligand>
        <name>GTP</name>
        <dbReference type="ChEBI" id="CHEBI:37565"/>
    </ligand>
</feature>
<feature type="binding site" evidence="1">
    <location>
        <begin position="314"/>
        <end position="316"/>
    </location>
    <ligand>
        <name>GTP</name>
        <dbReference type="ChEBI" id="CHEBI:37565"/>
    </ligand>
</feature>
<comment type="function">
    <text evidence="1">An essential GTPase which binds GTP, GDP and possibly (p)ppGpp with moderate affinity, with high nucleotide exchange rates and a fairly low GTP hydrolysis rate. Plays a role in control of the cell cycle, stress response, ribosome biogenesis and in those bacteria that undergo differentiation, in morphogenesis control.</text>
</comment>
<comment type="cofactor">
    <cofactor evidence="1">
        <name>Mg(2+)</name>
        <dbReference type="ChEBI" id="CHEBI:18420"/>
    </cofactor>
</comment>
<comment type="subunit">
    <text evidence="1">Monomer.</text>
</comment>
<comment type="subcellular location">
    <subcellularLocation>
        <location evidence="1">Cytoplasm</location>
    </subcellularLocation>
</comment>
<comment type="similarity">
    <text evidence="1">Belongs to the TRAFAC class OBG-HflX-like GTPase superfamily. OBG GTPase family.</text>
</comment>
<keyword id="KW-0963">Cytoplasm</keyword>
<keyword id="KW-0342">GTP-binding</keyword>
<keyword id="KW-0378">Hydrolase</keyword>
<keyword id="KW-0460">Magnesium</keyword>
<keyword id="KW-0479">Metal-binding</keyword>
<keyword id="KW-0547">Nucleotide-binding</keyword>
<keyword id="KW-1185">Reference proteome</keyword>
<gene>
    <name evidence="1" type="primary">obg</name>
    <name type="ordered locus">ECA0693</name>
</gene>